<protein>
    <recommendedName>
        <fullName evidence="5">sn-2 acyl-lipid omega-3 desaturase (ferredoxin), chloroplastic</fullName>
        <ecNumber evidence="3">1.14.19.35</ecNumber>
    </recommendedName>
    <alternativeName>
        <fullName evidence="5">Omega-3 fatty acid desaturase 7, chloroplastic</fullName>
    </alternativeName>
</protein>
<reference key="1">
    <citation type="journal article" date="1993" name="Plant Physiol.">
        <title>Cloning of higher plant omega-3 fatty acid desaturases.</title>
        <authorList>
            <person name="Yadav N.S."/>
            <person name="Wierzbicki A."/>
            <person name="Aegerter M."/>
            <person name="Caster C.S."/>
            <person name="Perez-Grau L."/>
            <person name="Kinney A.J."/>
            <person name="Hitz W.D."/>
            <person name="Booth J.R. Jr."/>
            <person name="Schweiger B."/>
            <person name="Stecca K.L."/>
            <person name="Allen S.M."/>
            <person name="Blackwell M."/>
            <person name="Reiter R.S."/>
            <person name="Carlson T.J."/>
            <person name="Russell S.H."/>
            <person name="Feldmann K.A."/>
            <person name="Pierce J."/>
            <person name="Browse J."/>
        </authorList>
    </citation>
    <scope>NUCLEOTIDE SEQUENCE [MRNA]</scope>
    <source>
        <strain>cv. Columbia</strain>
        <tissue>Hypocotyl</tissue>
    </source>
</reference>
<reference key="2">
    <citation type="journal article" date="1993" name="J. Biol. Chem.">
        <title>A gene encoding a chloroplast omega-3 fatty acid desaturase complements alterations in fatty acid desaturation and chloroplast copy number of the fad7 mutant of Arabidopsis thaliana.</title>
        <authorList>
            <person name="Iba K."/>
            <person name="Gibson S."/>
            <person name="Nishiuchi T."/>
            <person name="Fuse T."/>
            <person name="Nishimura M."/>
            <person name="Arondel V."/>
            <person name="Hugly S."/>
            <person name="Somerville C.R."/>
        </authorList>
    </citation>
    <scope>NUCLEOTIDE SEQUENCE [GENOMIC DNA]</scope>
    <scope>FUNCTION</scope>
    <scope>CATALYTIC ACTIVITY</scope>
    <scope>PATHWAY</scope>
    <scope>TISSUE SPECIFICITY</scope>
    <source>
        <strain>cv. Columbia</strain>
        <tissue>Aerial part</tissue>
    </source>
</reference>
<reference key="3">
    <citation type="submission" date="1993-11" db="EMBL/GenBank/DDBJ databases">
        <title>cDNA cloning of fatty acid desaturase from Arabidopsis thaliana.</title>
        <authorList>
            <person name="Watahiki M."/>
            <person name="Yamamoto K."/>
        </authorList>
    </citation>
    <scope>NUCLEOTIDE SEQUENCE [MRNA]</scope>
    <source>
        <strain>cv. Columbia</strain>
        <tissue>Hypocotyl</tissue>
    </source>
</reference>
<reference key="4">
    <citation type="journal article" date="2000" name="Nature">
        <title>Sequence and analysis of chromosome 3 of the plant Arabidopsis thaliana.</title>
        <authorList>
            <person name="Salanoubat M."/>
            <person name="Lemcke K."/>
            <person name="Rieger M."/>
            <person name="Ansorge W."/>
            <person name="Unseld M."/>
            <person name="Fartmann B."/>
            <person name="Valle G."/>
            <person name="Bloecker H."/>
            <person name="Perez-Alonso M."/>
            <person name="Obermaier B."/>
            <person name="Delseny M."/>
            <person name="Boutry M."/>
            <person name="Grivell L.A."/>
            <person name="Mache R."/>
            <person name="Puigdomenech P."/>
            <person name="De Simone V."/>
            <person name="Choisne N."/>
            <person name="Artiguenave F."/>
            <person name="Robert C."/>
            <person name="Brottier P."/>
            <person name="Wincker P."/>
            <person name="Cattolico L."/>
            <person name="Weissenbach J."/>
            <person name="Saurin W."/>
            <person name="Quetier F."/>
            <person name="Schaefer M."/>
            <person name="Mueller-Auer S."/>
            <person name="Gabel C."/>
            <person name="Fuchs M."/>
            <person name="Benes V."/>
            <person name="Wurmbach E."/>
            <person name="Drzonek H."/>
            <person name="Erfle H."/>
            <person name="Jordan N."/>
            <person name="Bangert S."/>
            <person name="Wiedelmann R."/>
            <person name="Kranz H."/>
            <person name="Voss H."/>
            <person name="Holland R."/>
            <person name="Brandt P."/>
            <person name="Nyakatura G."/>
            <person name="Vezzi A."/>
            <person name="D'Angelo M."/>
            <person name="Pallavicini A."/>
            <person name="Toppo S."/>
            <person name="Simionati B."/>
            <person name="Conrad A."/>
            <person name="Hornischer K."/>
            <person name="Kauer G."/>
            <person name="Loehnert T.-H."/>
            <person name="Nordsiek G."/>
            <person name="Reichelt J."/>
            <person name="Scharfe M."/>
            <person name="Schoen O."/>
            <person name="Bargues M."/>
            <person name="Terol J."/>
            <person name="Climent J."/>
            <person name="Navarro P."/>
            <person name="Collado C."/>
            <person name="Perez-Perez A."/>
            <person name="Ottenwaelder B."/>
            <person name="Duchemin D."/>
            <person name="Cooke R."/>
            <person name="Laudie M."/>
            <person name="Berger-Llauro C."/>
            <person name="Purnelle B."/>
            <person name="Masuy D."/>
            <person name="de Haan M."/>
            <person name="Maarse A.C."/>
            <person name="Alcaraz J.-P."/>
            <person name="Cottet A."/>
            <person name="Casacuberta E."/>
            <person name="Monfort A."/>
            <person name="Argiriou A."/>
            <person name="Flores M."/>
            <person name="Liguori R."/>
            <person name="Vitale D."/>
            <person name="Mannhaupt G."/>
            <person name="Haase D."/>
            <person name="Schoof H."/>
            <person name="Rudd S."/>
            <person name="Zaccaria P."/>
            <person name="Mewes H.-W."/>
            <person name="Mayer K.F.X."/>
            <person name="Kaul S."/>
            <person name="Town C.D."/>
            <person name="Koo H.L."/>
            <person name="Tallon L.J."/>
            <person name="Jenkins J."/>
            <person name="Rooney T."/>
            <person name="Rizzo M."/>
            <person name="Walts A."/>
            <person name="Utterback T."/>
            <person name="Fujii C.Y."/>
            <person name="Shea T.P."/>
            <person name="Creasy T.H."/>
            <person name="Haas B."/>
            <person name="Maiti R."/>
            <person name="Wu D."/>
            <person name="Peterson J."/>
            <person name="Van Aken S."/>
            <person name="Pai G."/>
            <person name="Militscher J."/>
            <person name="Sellers P."/>
            <person name="Gill J.E."/>
            <person name="Feldblyum T.V."/>
            <person name="Preuss D."/>
            <person name="Lin X."/>
            <person name="Nierman W.C."/>
            <person name="Salzberg S.L."/>
            <person name="White O."/>
            <person name="Venter J.C."/>
            <person name="Fraser C.M."/>
            <person name="Kaneko T."/>
            <person name="Nakamura Y."/>
            <person name="Sato S."/>
            <person name="Kato T."/>
            <person name="Asamizu E."/>
            <person name="Sasamoto S."/>
            <person name="Kimura T."/>
            <person name="Idesawa K."/>
            <person name="Kawashima K."/>
            <person name="Kishida Y."/>
            <person name="Kiyokawa C."/>
            <person name="Kohara M."/>
            <person name="Matsumoto M."/>
            <person name="Matsuno A."/>
            <person name="Muraki A."/>
            <person name="Nakayama S."/>
            <person name="Nakazaki N."/>
            <person name="Shinpo S."/>
            <person name="Takeuchi C."/>
            <person name="Wada T."/>
            <person name="Watanabe A."/>
            <person name="Yamada M."/>
            <person name="Yasuda M."/>
            <person name="Tabata S."/>
        </authorList>
    </citation>
    <scope>NUCLEOTIDE SEQUENCE [LARGE SCALE GENOMIC DNA]</scope>
    <source>
        <strain>cv. Columbia</strain>
    </source>
</reference>
<reference key="5">
    <citation type="journal article" date="2017" name="Plant J.">
        <title>Araport11: a complete reannotation of the Arabidopsis thaliana reference genome.</title>
        <authorList>
            <person name="Cheng C.Y."/>
            <person name="Krishnakumar V."/>
            <person name="Chan A.P."/>
            <person name="Thibaud-Nissen F."/>
            <person name="Schobel S."/>
            <person name="Town C.D."/>
        </authorList>
    </citation>
    <scope>GENOME REANNOTATION</scope>
    <source>
        <strain>cv. Columbia</strain>
    </source>
</reference>
<reference key="6">
    <citation type="journal article" date="2003" name="Mol. Cell. Proteomics">
        <title>Proteomics of the chloroplast envelope membranes from Arabidopsis thaliana.</title>
        <authorList>
            <person name="Ferro M."/>
            <person name="Salvi D."/>
            <person name="Brugiere S."/>
            <person name="Miras S."/>
            <person name="Kowalski S."/>
            <person name="Louwagie M."/>
            <person name="Garin J."/>
            <person name="Joyard J."/>
            <person name="Rolland N."/>
        </authorList>
    </citation>
    <scope>IDENTIFICATION BY MASS SPECTROMETRY</scope>
    <scope>SUBCELLULAR LOCATION [LARGE SCALE ANALYSIS]</scope>
    <source>
        <strain>cv. Wassilewskija</strain>
    </source>
</reference>
<keyword id="KW-0150">Chloroplast</keyword>
<keyword id="KW-0275">Fatty acid biosynthesis</keyword>
<keyword id="KW-0276">Fatty acid metabolism</keyword>
<keyword id="KW-0444">Lipid biosynthesis</keyword>
<keyword id="KW-0443">Lipid metabolism</keyword>
<keyword id="KW-0472">Membrane</keyword>
<keyword id="KW-0560">Oxidoreductase</keyword>
<keyword id="KW-0934">Plastid</keyword>
<keyword id="KW-1001">Plastid inner membrane</keyword>
<keyword id="KW-1185">Reference proteome</keyword>
<keyword id="KW-0809">Transit peptide</keyword>
<keyword id="KW-0812">Transmembrane</keyword>
<keyword id="KW-1133">Transmembrane helix</keyword>
<proteinExistence type="evidence at protein level"/>
<accession>P46310</accession>
<gene>
    <name evidence="5" type="primary">FAD7</name>
    <name evidence="4" type="synonym">FADD</name>
    <name evidence="7" type="ordered locus">At3g11170</name>
    <name evidence="9" type="ORF">F11B9.10</name>
    <name evidence="8" type="ORF">F9F8.4</name>
</gene>
<feature type="transit peptide" description="Chloroplast" evidence="6">
    <location>
        <begin position="1"/>
        <end position="65"/>
    </location>
</feature>
<feature type="chain" id="PRO_0000007117" description="sn-2 acyl-lipid omega-3 desaturase (ferredoxin), chloroplastic" evidence="1">
    <location>
        <begin position="66"/>
        <end position="446"/>
    </location>
</feature>
<feature type="transmembrane region" description="Helical" evidence="1">
    <location>
        <begin position="118"/>
        <end position="138"/>
    </location>
</feature>
<feature type="transmembrane region" description="Helical" evidence="1">
    <location>
        <begin position="141"/>
        <end position="161"/>
    </location>
</feature>
<feature type="transmembrane region" description="Helical" evidence="1">
    <location>
        <begin position="231"/>
        <end position="250"/>
    </location>
</feature>
<feature type="transmembrane region" description="Helical" evidence="1">
    <location>
        <begin position="279"/>
        <end position="299"/>
    </location>
</feature>
<feature type="transmembrane region" description="Helical" evidence="1">
    <location>
        <begin position="302"/>
        <end position="322"/>
    </location>
</feature>
<feature type="short sequence motif" description="Histidine box-1" evidence="6">
    <location>
        <begin position="163"/>
        <end position="167"/>
    </location>
</feature>
<feature type="short sequence motif" description="Histidine box-2" evidence="6">
    <location>
        <begin position="199"/>
        <end position="203"/>
    </location>
</feature>
<feature type="short sequence motif" description="Histidine box-3" evidence="6">
    <location>
        <begin position="366"/>
        <end position="370"/>
    </location>
</feature>
<name>FAD3C_ARATH</name>
<dbReference type="EC" id="1.14.19.35" evidence="3"/>
<dbReference type="EMBL" id="L22961">
    <property type="protein sequence ID" value="AAA61773.1"/>
    <property type="molecule type" value="mRNA"/>
</dbReference>
<dbReference type="EMBL" id="D14007">
    <property type="protein sequence ID" value="BAA03106.1"/>
    <property type="molecule type" value="Genomic_DNA"/>
</dbReference>
<dbReference type="EMBL" id="D26019">
    <property type="protein sequence ID" value="BAA05040.1"/>
    <property type="molecule type" value="mRNA"/>
</dbReference>
<dbReference type="EMBL" id="AC009991">
    <property type="protein sequence ID" value="AAF01508.1"/>
    <property type="molecule type" value="Genomic_DNA"/>
</dbReference>
<dbReference type="EMBL" id="AC073395">
    <property type="protein sequence ID" value="AAG50977.1"/>
    <property type="molecule type" value="Genomic_DNA"/>
</dbReference>
<dbReference type="EMBL" id="CP002686">
    <property type="protein sequence ID" value="AEE75009.1"/>
    <property type="molecule type" value="Genomic_DNA"/>
</dbReference>
<dbReference type="PIR" id="JQ2336">
    <property type="entry name" value="JQ2336"/>
</dbReference>
<dbReference type="RefSeq" id="NP_187727.1">
    <property type="nucleotide sequence ID" value="NM_111953.3"/>
</dbReference>
<dbReference type="SMR" id="P46310"/>
<dbReference type="BioGRID" id="5622">
    <property type="interactions" value="2"/>
</dbReference>
<dbReference type="FunCoup" id="P46310">
    <property type="interactions" value="378"/>
</dbReference>
<dbReference type="STRING" id="3702.P46310"/>
<dbReference type="PaxDb" id="3702-AT3G11170.1"/>
<dbReference type="ProteomicsDB" id="230845"/>
<dbReference type="EnsemblPlants" id="AT3G11170.1">
    <property type="protein sequence ID" value="AT3G11170.1"/>
    <property type="gene ID" value="AT3G11170"/>
</dbReference>
<dbReference type="GeneID" id="820288"/>
<dbReference type="Gramene" id="AT3G11170.1">
    <property type="protein sequence ID" value="AT3G11170.1"/>
    <property type="gene ID" value="AT3G11170"/>
</dbReference>
<dbReference type="KEGG" id="ath:AT3G11170"/>
<dbReference type="Araport" id="AT3G11170"/>
<dbReference type="TAIR" id="AT3G11170">
    <property type="gene designation" value="FAD7"/>
</dbReference>
<dbReference type="eggNOG" id="ENOG502QQQ2">
    <property type="taxonomic scope" value="Eukaryota"/>
</dbReference>
<dbReference type="HOGENOM" id="CLU_033094_1_0_1"/>
<dbReference type="InParanoid" id="P46310"/>
<dbReference type="OMA" id="CWTAMAV"/>
<dbReference type="PhylomeDB" id="P46310"/>
<dbReference type="BioCyc" id="ARA:AT3G11170-MONOMER"/>
<dbReference type="BioCyc" id="MetaCyc:AT3G11170-MONOMER"/>
<dbReference type="BRENDA" id="1.14.19.35">
    <property type="organism ID" value="399"/>
</dbReference>
<dbReference type="UniPathway" id="UPA00658"/>
<dbReference type="PRO" id="PR:P46310"/>
<dbReference type="Proteomes" id="UP000006548">
    <property type="component" value="Chromosome 3"/>
</dbReference>
<dbReference type="ExpressionAtlas" id="P46310">
    <property type="expression patterns" value="baseline and differential"/>
</dbReference>
<dbReference type="GO" id="GO:0009507">
    <property type="term" value="C:chloroplast"/>
    <property type="evidence" value="ECO:0007005"/>
    <property type="project" value="TAIR"/>
</dbReference>
<dbReference type="GO" id="GO:0009941">
    <property type="term" value="C:chloroplast envelope"/>
    <property type="evidence" value="ECO:0007005"/>
    <property type="project" value="TAIR"/>
</dbReference>
<dbReference type="GO" id="GO:0009706">
    <property type="term" value="C:chloroplast inner membrane"/>
    <property type="evidence" value="ECO:0007669"/>
    <property type="project" value="UniProtKB-SubCell"/>
</dbReference>
<dbReference type="GO" id="GO:0005829">
    <property type="term" value="C:cytosol"/>
    <property type="evidence" value="ECO:0007005"/>
    <property type="project" value="TAIR"/>
</dbReference>
<dbReference type="GO" id="GO:0042170">
    <property type="term" value="C:plastid membrane"/>
    <property type="evidence" value="ECO:0000304"/>
    <property type="project" value="TAIR"/>
</dbReference>
<dbReference type="GO" id="GO:0102993">
    <property type="term" value="F:sn-2 acyl-lipid omega-3 desaturase (ferredoxin) activity"/>
    <property type="evidence" value="ECO:0007669"/>
    <property type="project" value="UniProtKB-EC"/>
</dbReference>
<dbReference type="GO" id="GO:0006633">
    <property type="term" value="P:fatty acid biosynthetic process"/>
    <property type="evidence" value="ECO:0000315"/>
    <property type="project" value="TAIR"/>
</dbReference>
<dbReference type="GO" id="GO:0009409">
    <property type="term" value="P:response to cold"/>
    <property type="evidence" value="ECO:0000315"/>
    <property type="project" value="TAIR"/>
</dbReference>
<dbReference type="GO" id="GO:0006636">
    <property type="term" value="P:unsaturated fatty acid biosynthetic process"/>
    <property type="evidence" value="ECO:0007669"/>
    <property type="project" value="UniProtKB-UniPathway"/>
</dbReference>
<dbReference type="CDD" id="cd03507">
    <property type="entry name" value="Delta12-FADS-like"/>
    <property type="match status" value="1"/>
</dbReference>
<dbReference type="InterPro" id="IPR005804">
    <property type="entry name" value="FA_desaturase_dom"/>
</dbReference>
<dbReference type="InterPro" id="IPR021863">
    <property type="entry name" value="FAS_N"/>
</dbReference>
<dbReference type="InterPro" id="IPR012171">
    <property type="entry name" value="Fatty_acid_desaturase"/>
</dbReference>
<dbReference type="PANTHER" id="PTHR32100">
    <property type="entry name" value="OMEGA-6 FATTY ACID DESATURASE, CHLOROPLASTIC"/>
    <property type="match status" value="1"/>
</dbReference>
<dbReference type="Pfam" id="PF11960">
    <property type="entry name" value="DUF3474"/>
    <property type="match status" value="1"/>
</dbReference>
<dbReference type="Pfam" id="PF00487">
    <property type="entry name" value="FA_desaturase"/>
    <property type="match status" value="1"/>
</dbReference>
<sequence length="446" mass="51174">MANLVLSECGIRPLPRIYTTPRSNFLSNNNKFRPSLSSSSYKTSSSPLSFGLNSRDGFTRNWALNVSTPLTTPIFEESPLEEDNKQRFDPGAPPPFNLADIRAAIPKHCWVKNPWKSLSYVVRDVAIVFALAAGAAYLNNWIVWPLYWLAQGTMFWALFVLGHDCGHGSFSNDPKLNSVVGHLLHSSILVPYHGWRISHRTHHQNHGHVENDESWHPMSEKIYNTLDKPTRFFRFTLPLVMLAYPFYLWARSPGKKGSHYHPDSDLFLPKERKDVLTSTACWTAMAALLVCLNFTIGPIQMLKLYGIPYWINVMWLDFVTYLHHHGHEDKLPWYRGKEWSYLRGGLTTLDRDYGLINNIHHDIGTHVIHHLFPQIPHYHLVEATEAAKPVLGKYYREPDKSGPLPLHLLEILAKSIKEDHYVSDEGEVVYYKADPNLYGEVKVRAD</sequence>
<evidence type="ECO:0000255" key="1"/>
<evidence type="ECO:0000269" key="2">
    <source>
    </source>
</evidence>
<evidence type="ECO:0000269" key="3">
    <source>
    </source>
</evidence>
<evidence type="ECO:0000303" key="4">
    <source>
    </source>
</evidence>
<evidence type="ECO:0000303" key="5">
    <source>
    </source>
</evidence>
<evidence type="ECO:0000305" key="6"/>
<evidence type="ECO:0000312" key="7">
    <source>
        <dbReference type="Araport" id="AT3G11170"/>
    </source>
</evidence>
<evidence type="ECO:0000312" key="8">
    <source>
        <dbReference type="EMBL" id="AAF01508.1"/>
    </source>
</evidence>
<evidence type="ECO:0000312" key="9">
    <source>
        <dbReference type="EMBL" id="AAG50977.1"/>
    </source>
</evidence>
<comment type="function">
    <text evidence="3">Chloroplast omega-3 fatty acid desaturase introduces the third double bond in the biosynthesis of 16:3 and 18:3 fatty acids, important constituents of plant membranes. It is thought to use ferredoxin as an electron donor and to act on fatty acids esterified to galactolipids, sulfolipids and phosphatidylglycerol.</text>
</comment>
<comment type="catalytic activity">
    <reaction evidence="3">
        <text>a (7Z,10Z)-hexadecadienoyl-containing glycerolipid + 2 reduced [2Fe-2S]-[ferredoxin] + O2 + 2 H(+) = a (7Z,10Z,13Z)-hexadecatrienoyl-containing glycerolipid + 2 oxidized [2Fe-2S]-[ferredoxin] + 2 H2O</text>
        <dbReference type="Rhea" id="RHEA:46412"/>
        <dbReference type="Rhea" id="RHEA-COMP:10000"/>
        <dbReference type="Rhea" id="RHEA-COMP:10001"/>
        <dbReference type="ChEBI" id="CHEBI:15377"/>
        <dbReference type="ChEBI" id="CHEBI:15378"/>
        <dbReference type="ChEBI" id="CHEBI:15379"/>
        <dbReference type="ChEBI" id="CHEBI:33737"/>
        <dbReference type="ChEBI" id="CHEBI:33738"/>
        <dbReference type="ChEBI" id="CHEBI:88268"/>
        <dbReference type="ChEBI" id="CHEBI:88269"/>
        <dbReference type="EC" id="1.14.19.35"/>
    </reaction>
</comment>
<comment type="catalytic activity">
    <reaction evidence="3">
        <text>a (9Z,12Z)-octadecadienoyl-containing glycerolipid + 2 reduced [2Fe-2S]-[ferredoxin] + O2 + 2 H(+) = (9Z,12Z,15Z)-octadecatrienoyl-containing glycerolipid + 2 oxidized [2Fe-2S]-[ferredoxin] + 2 H2O</text>
        <dbReference type="Rhea" id="RHEA:46408"/>
        <dbReference type="Rhea" id="RHEA-COMP:10000"/>
        <dbReference type="Rhea" id="RHEA-COMP:10001"/>
        <dbReference type="ChEBI" id="CHEBI:15377"/>
        <dbReference type="ChEBI" id="CHEBI:15378"/>
        <dbReference type="ChEBI" id="CHEBI:15379"/>
        <dbReference type="ChEBI" id="CHEBI:33737"/>
        <dbReference type="ChEBI" id="CHEBI:33738"/>
        <dbReference type="ChEBI" id="CHEBI:88351"/>
        <dbReference type="ChEBI" id="CHEBI:90078"/>
        <dbReference type="EC" id="1.14.19.35"/>
    </reaction>
</comment>
<comment type="pathway">
    <text evidence="3">Lipid metabolism; polyunsaturated fatty acid biosynthesis.</text>
</comment>
<comment type="subcellular location">
    <subcellularLocation>
        <location evidence="2">Plastid</location>
        <location evidence="2">Chloroplast inner membrane</location>
        <topology evidence="2">Multi-pass membrane protein</topology>
    </subcellularLocation>
</comment>
<comment type="tissue specificity">
    <text evidence="3">Most abundant in leaves and seedlings.</text>
</comment>
<comment type="domain">
    <text evidence="6">The histidine box domains may contain the active site and/or be involved in metal ion binding.</text>
</comment>
<comment type="similarity">
    <text evidence="6">Belongs to the fatty acid desaturase type 1 family.</text>
</comment>
<organism>
    <name type="scientific">Arabidopsis thaliana</name>
    <name type="common">Mouse-ear cress</name>
    <dbReference type="NCBI Taxonomy" id="3702"/>
    <lineage>
        <taxon>Eukaryota</taxon>
        <taxon>Viridiplantae</taxon>
        <taxon>Streptophyta</taxon>
        <taxon>Embryophyta</taxon>
        <taxon>Tracheophyta</taxon>
        <taxon>Spermatophyta</taxon>
        <taxon>Magnoliopsida</taxon>
        <taxon>eudicotyledons</taxon>
        <taxon>Gunneridae</taxon>
        <taxon>Pentapetalae</taxon>
        <taxon>rosids</taxon>
        <taxon>malvids</taxon>
        <taxon>Brassicales</taxon>
        <taxon>Brassicaceae</taxon>
        <taxon>Camelineae</taxon>
        <taxon>Arabidopsis</taxon>
    </lineage>
</organism>